<organism>
    <name type="scientific">Herpetosiphon aurantiacus (strain ATCC 23779 / DSM 785 / 114-95)</name>
    <dbReference type="NCBI Taxonomy" id="316274"/>
    <lineage>
        <taxon>Bacteria</taxon>
        <taxon>Bacillati</taxon>
        <taxon>Chloroflexota</taxon>
        <taxon>Chloroflexia</taxon>
        <taxon>Herpetosiphonales</taxon>
        <taxon>Herpetosiphonaceae</taxon>
        <taxon>Herpetosiphon</taxon>
    </lineage>
</organism>
<evidence type="ECO:0000255" key="1">
    <source>
        <dbReference type="HAMAP-Rule" id="MF_01609"/>
    </source>
</evidence>
<gene>
    <name type="ordered locus">Haur_4831</name>
</gene>
<accession>A9B2Z8</accession>
<reference key="1">
    <citation type="journal article" date="2011" name="Stand. Genomic Sci.">
        <title>Complete genome sequence of the filamentous gliding predatory bacterium Herpetosiphon aurantiacus type strain (114-95(T)).</title>
        <authorList>
            <person name="Kiss H."/>
            <person name="Nett M."/>
            <person name="Domin N."/>
            <person name="Martin K."/>
            <person name="Maresca J.A."/>
            <person name="Copeland A."/>
            <person name="Lapidus A."/>
            <person name="Lucas S."/>
            <person name="Berry K.W."/>
            <person name="Glavina Del Rio T."/>
            <person name="Dalin E."/>
            <person name="Tice H."/>
            <person name="Pitluck S."/>
            <person name="Richardson P."/>
            <person name="Bruce D."/>
            <person name="Goodwin L."/>
            <person name="Han C."/>
            <person name="Detter J.C."/>
            <person name="Schmutz J."/>
            <person name="Brettin T."/>
            <person name="Land M."/>
            <person name="Hauser L."/>
            <person name="Kyrpides N.C."/>
            <person name="Ivanova N."/>
            <person name="Goeker M."/>
            <person name="Woyke T."/>
            <person name="Klenk H.P."/>
            <person name="Bryant D.A."/>
        </authorList>
    </citation>
    <scope>NUCLEOTIDE SEQUENCE [LARGE SCALE GENOMIC DNA]</scope>
    <source>
        <strain>ATCC 23779 / DSM 785 / 114-95</strain>
    </source>
</reference>
<dbReference type="EC" id="6.3.2.2" evidence="1"/>
<dbReference type="EMBL" id="CP000875">
    <property type="protein sequence ID" value="ABX07461.1"/>
    <property type="molecule type" value="Genomic_DNA"/>
</dbReference>
<dbReference type="SMR" id="A9B2Z8"/>
<dbReference type="STRING" id="316274.Haur_4831"/>
<dbReference type="KEGG" id="hau:Haur_4831"/>
<dbReference type="eggNOG" id="COG2170">
    <property type="taxonomic scope" value="Bacteria"/>
</dbReference>
<dbReference type="HOGENOM" id="CLU_044848_1_0_0"/>
<dbReference type="InParanoid" id="A9B2Z8"/>
<dbReference type="BioCyc" id="HAUR316274:GHYA-4890-MONOMER"/>
<dbReference type="Proteomes" id="UP000000787">
    <property type="component" value="Chromosome"/>
</dbReference>
<dbReference type="GO" id="GO:0005524">
    <property type="term" value="F:ATP binding"/>
    <property type="evidence" value="ECO:0007669"/>
    <property type="project" value="UniProtKB-KW"/>
</dbReference>
<dbReference type="GO" id="GO:0004357">
    <property type="term" value="F:glutamate-cysteine ligase activity"/>
    <property type="evidence" value="ECO:0007669"/>
    <property type="project" value="UniProtKB-EC"/>
</dbReference>
<dbReference type="GO" id="GO:0042398">
    <property type="term" value="P:modified amino acid biosynthetic process"/>
    <property type="evidence" value="ECO:0007669"/>
    <property type="project" value="InterPro"/>
</dbReference>
<dbReference type="Gene3D" id="3.30.590.20">
    <property type="match status" value="1"/>
</dbReference>
<dbReference type="HAMAP" id="MF_01609">
    <property type="entry name" value="Glu_cys_ligase_2"/>
    <property type="match status" value="1"/>
</dbReference>
<dbReference type="InterPro" id="IPR050141">
    <property type="entry name" value="GCL_type2/YbdK_subfam"/>
</dbReference>
<dbReference type="InterPro" id="IPR006336">
    <property type="entry name" value="GCS2"/>
</dbReference>
<dbReference type="InterPro" id="IPR014746">
    <property type="entry name" value="Gln_synth/guanido_kin_cat_dom"/>
</dbReference>
<dbReference type="InterPro" id="IPR011793">
    <property type="entry name" value="YbdK"/>
</dbReference>
<dbReference type="NCBIfam" id="TIGR02050">
    <property type="entry name" value="gshA_cyan_rel"/>
    <property type="match status" value="1"/>
</dbReference>
<dbReference type="NCBIfam" id="NF010039">
    <property type="entry name" value="PRK13515.1"/>
    <property type="match status" value="1"/>
</dbReference>
<dbReference type="PANTHER" id="PTHR36510">
    <property type="entry name" value="GLUTAMATE--CYSTEINE LIGASE 2-RELATED"/>
    <property type="match status" value="1"/>
</dbReference>
<dbReference type="PANTHER" id="PTHR36510:SF1">
    <property type="entry name" value="GLUTAMATE--CYSTEINE LIGASE 2-RELATED"/>
    <property type="match status" value="1"/>
</dbReference>
<dbReference type="Pfam" id="PF04107">
    <property type="entry name" value="GCS2"/>
    <property type="match status" value="1"/>
</dbReference>
<dbReference type="SUPFAM" id="SSF55931">
    <property type="entry name" value="Glutamine synthetase/guanido kinase"/>
    <property type="match status" value="1"/>
</dbReference>
<feature type="chain" id="PRO_1000148222" description="Putative glutamate--cysteine ligase 2">
    <location>
        <begin position="1"/>
        <end position="385"/>
    </location>
</feature>
<keyword id="KW-0067">ATP-binding</keyword>
<keyword id="KW-0436">Ligase</keyword>
<keyword id="KW-0547">Nucleotide-binding</keyword>
<comment type="function">
    <text evidence="1">ATP-dependent carboxylate-amine ligase which exhibits weak glutamate--cysteine ligase activity.</text>
</comment>
<comment type="catalytic activity">
    <reaction evidence="1">
        <text>L-cysteine + L-glutamate + ATP = gamma-L-glutamyl-L-cysteine + ADP + phosphate + H(+)</text>
        <dbReference type="Rhea" id="RHEA:13285"/>
        <dbReference type="ChEBI" id="CHEBI:15378"/>
        <dbReference type="ChEBI" id="CHEBI:29985"/>
        <dbReference type="ChEBI" id="CHEBI:30616"/>
        <dbReference type="ChEBI" id="CHEBI:35235"/>
        <dbReference type="ChEBI" id="CHEBI:43474"/>
        <dbReference type="ChEBI" id="CHEBI:58173"/>
        <dbReference type="ChEBI" id="CHEBI:456216"/>
        <dbReference type="EC" id="6.3.2.2"/>
    </reaction>
</comment>
<comment type="similarity">
    <text evidence="1">Belongs to the glutamate--cysteine ligase type 2 family. YbdK subfamily.</text>
</comment>
<proteinExistence type="inferred from homology"/>
<sequence>MEYRDPGHPHFPFTIGIEEEYQIIDPETRELKSYITQILDEGQLILREQMKPEMHQSIVEVGTHVCRTVEEARAEIIRLRGAIGSLAASKGLRIAAAGTHPFSSWQKQDIYPHERYYGVIEEMQEAARRLLIFGMHVHIGMPDNETCIEIMNVARYFLPHLLALSTSSPFWMGRKTGFQSYRSIIFTNFPRTGIPDTFQSYAEFEQYINILLKTHSIDNGKKVWWDARPHPMFGTLEVRICDIATKVDEAIMIAGLVQAIFVKIYSLFRQNQTFRVYSRALINENKWRAARYGMGGKLIDFGRREELSAHDLMAELREFVDDVVDDLGSRAAVDYIDQVLKHGTSAERQLRTYEETGDIKAVVDQLIRETMEGVPLDQATQVVSG</sequence>
<protein>
    <recommendedName>
        <fullName evidence="1">Putative glutamate--cysteine ligase 2</fullName>
        <ecNumber evidence="1">6.3.2.2</ecNumber>
    </recommendedName>
    <alternativeName>
        <fullName evidence="1">Gamma-glutamylcysteine synthetase 2</fullName>
        <shortName evidence="1">GCS 2</shortName>
        <shortName evidence="1">Gamma-GCS 2</shortName>
    </alternativeName>
</protein>
<name>GCS2_HERA2</name>